<gene>
    <name type="primary">nagD</name>
    <name type="ordered locus">SERP0515</name>
</gene>
<dbReference type="EC" id="3.1.3.-" evidence="1"/>
<dbReference type="EMBL" id="CP000029">
    <property type="protein sequence ID" value="AAW53898.1"/>
    <property type="molecule type" value="Genomic_DNA"/>
</dbReference>
<dbReference type="RefSeq" id="WP_002475052.1">
    <property type="nucleotide sequence ID" value="NC_002976.3"/>
</dbReference>
<dbReference type="SMR" id="Q5HQN3"/>
<dbReference type="STRING" id="176279.SERP0515"/>
<dbReference type="KEGG" id="ser:SERP0515"/>
<dbReference type="eggNOG" id="COG0647">
    <property type="taxonomic scope" value="Bacteria"/>
</dbReference>
<dbReference type="HOGENOM" id="CLU_043473_1_1_9"/>
<dbReference type="Proteomes" id="UP000000531">
    <property type="component" value="Chromosome"/>
</dbReference>
<dbReference type="GO" id="GO:0005737">
    <property type="term" value="C:cytoplasm"/>
    <property type="evidence" value="ECO:0007669"/>
    <property type="project" value="TreeGrafter"/>
</dbReference>
<dbReference type="GO" id="GO:0046872">
    <property type="term" value="F:metal ion binding"/>
    <property type="evidence" value="ECO:0007669"/>
    <property type="project" value="UniProtKB-KW"/>
</dbReference>
<dbReference type="GO" id="GO:0016791">
    <property type="term" value="F:phosphatase activity"/>
    <property type="evidence" value="ECO:0007669"/>
    <property type="project" value="TreeGrafter"/>
</dbReference>
<dbReference type="CDD" id="cd07530">
    <property type="entry name" value="HAD_Pase_UmpH-like"/>
    <property type="match status" value="1"/>
</dbReference>
<dbReference type="FunFam" id="3.40.50.1000:FF:000053">
    <property type="entry name" value="TIGR01457 family HAD hydrolase"/>
    <property type="match status" value="1"/>
</dbReference>
<dbReference type="Gene3D" id="3.40.50.1000">
    <property type="entry name" value="HAD superfamily/HAD-like"/>
    <property type="match status" value="2"/>
</dbReference>
<dbReference type="InterPro" id="IPR036412">
    <property type="entry name" value="HAD-like_sf"/>
</dbReference>
<dbReference type="InterPro" id="IPR006357">
    <property type="entry name" value="HAD-SF_hydro_IIA"/>
</dbReference>
<dbReference type="InterPro" id="IPR006354">
    <property type="entry name" value="HAD-SF_hydro_IIA_hyp1"/>
</dbReference>
<dbReference type="InterPro" id="IPR023214">
    <property type="entry name" value="HAD_sf"/>
</dbReference>
<dbReference type="NCBIfam" id="TIGR01460">
    <property type="entry name" value="HAD-SF-IIA"/>
    <property type="match status" value="1"/>
</dbReference>
<dbReference type="NCBIfam" id="TIGR01457">
    <property type="entry name" value="HAD-SF-IIA-hyp2"/>
    <property type="match status" value="1"/>
</dbReference>
<dbReference type="PANTHER" id="PTHR19288">
    <property type="entry name" value="4-NITROPHENYLPHOSPHATASE-RELATED"/>
    <property type="match status" value="1"/>
</dbReference>
<dbReference type="PANTHER" id="PTHR19288:SF46">
    <property type="entry name" value="HALOACID DEHALOGENASE-LIKE HYDROLASE DOMAIN-CONTAINING PROTEIN 2"/>
    <property type="match status" value="1"/>
</dbReference>
<dbReference type="Pfam" id="PF13344">
    <property type="entry name" value="Hydrolase_6"/>
    <property type="match status" value="1"/>
</dbReference>
<dbReference type="Pfam" id="PF13242">
    <property type="entry name" value="Hydrolase_like"/>
    <property type="match status" value="1"/>
</dbReference>
<dbReference type="PIRSF" id="PIRSF000915">
    <property type="entry name" value="PGP-type_phosphatase"/>
    <property type="match status" value="1"/>
</dbReference>
<dbReference type="SFLD" id="SFLDG01139">
    <property type="entry name" value="C2.A:_Pyridoxal_Phosphate_Phos"/>
    <property type="match status" value="1"/>
</dbReference>
<dbReference type="SFLD" id="SFLDS00003">
    <property type="entry name" value="Haloacid_Dehalogenase"/>
    <property type="match status" value="1"/>
</dbReference>
<dbReference type="SUPFAM" id="SSF56784">
    <property type="entry name" value="HAD-like"/>
    <property type="match status" value="1"/>
</dbReference>
<comment type="function">
    <text evidence="1">Catalyzes the dephosphorylation of 2-6 carbon acid sugars in vitro.</text>
</comment>
<comment type="cofactor">
    <cofactor evidence="1">
        <name>Mg(2+)</name>
        <dbReference type="ChEBI" id="CHEBI:18420"/>
    </cofactor>
</comment>
<comment type="similarity">
    <text evidence="2">Belongs to the HAD-like hydrolase superfamily. NagD family.</text>
</comment>
<reference key="1">
    <citation type="journal article" date="2005" name="J. Bacteriol.">
        <title>Insights on evolution of virulence and resistance from the complete genome analysis of an early methicillin-resistant Staphylococcus aureus strain and a biofilm-producing methicillin-resistant Staphylococcus epidermidis strain.</title>
        <authorList>
            <person name="Gill S.R."/>
            <person name="Fouts D.E."/>
            <person name="Archer G.L."/>
            <person name="Mongodin E.F."/>
            <person name="DeBoy R.T."/>
            <person name="Ravel J."/>
            <person name="Paulsen I.T."/>
            <person name="Kolonay J.F."/>
            <person name="Brinkac L.M."/>
            <person name="Beanan M.J."/>
            <person name="Dodson R.J."/>
            <person name="Daugherty S.C."/>
            <person name="Madupu R."/>
            <person name="Angiuoli S.V."/>
            <person name="Durkin A.S."/>
            <person name="Haft D.H."/>
            <person name="Vamathevan J.J."/>
            <person name="Khouri H."/>
            <person name="Utterback T.R."/>
            <person name="Lee C."/>
            <person name="Dimitrov G."/>
            <person name="Jiang L."/>
            <person name="Qin H."/>
            <person name="Weidman J."/>
            <person name="Tran K."/>
            <person name="Kang K.H."/>
            <person name="Hance I.R."/>
            <person name="Nelson K.E."/>
            <person name="Fraser C.M."/>
        </authorList>
    </citation>
    <scope>NUCLEOTIDE SEQUENCE [LARGE SCALE GENOMIC DNA]</scope>
    <source>
        <strain>ATCC 35984 / DSM 28319 / BCRC 17069 / CCUG 31568 / BM 3577 / RP62A</strain>
    </source>
</reference>
<name>NAGD_STAEQ</name>
<keyword id="KW-0378">Hydrolase</keyword>
<keyword id="KW-0460">Magnesium</keyword>
<keyword id="KW-0479">Metal-binding</keyword>
<keyword id="KW-1185">Reference proteome</keyword>
<organism>
    <name type="scientific">Staphylococcus epidermidis (strain ATCC 35984 / DSM 28319 / BCRC 17069 / CCUG 31568 / BM 3577 / RP62A)</name>
    <dbReference type="NCBI Taxonomy" id="176279"/>
    <lineage>
        <taxon>Bacteria</taxon>
        <taxon>Bacillati</taxon>
        <taxon>Bacillota</taxon>
        <taxon>Bacilli</taxon>
        <taxon>Bacillales</taxon>
        <taxon>Staphylococcaceae</taxon>
        <taxon>Staphylococcus</taxon>
    </lineage>
</organism>
<accession>Q5HQN3</accession>
<feature type="chain" id="PRO_0000271490" description="Acid sugar phosphatase">
    <location>
        <begin position="1"/>
        <end position="259"/>
    </location>
</feature>
<protein>
    <recommendedName>
        <fullName evidence="1">Acid sugar phosphatase</fullName>
        <ecNumber evidence="1">3.1.3.-</ecNumber>
    </recommendedName>
</protein>
<sequence>MKHYQAYLIDLDGTMYKGTEEIDGAAQFIDYLNNNRIPHLYVTNNSTKTPVQVTEKLREMHIDAKPDEVVTSALATADYISEQHPNATVYMIGGHGLKTALTDAGLSIKNDEHVDYVVIGLDEKVTYEKLSIATLAVRNGAKFISTNPDVSIPKERGFLPGNGAITSVVSVSTGIQPEFIGKPETIIMSKSLDILGLEKSEVAMVGDLYDTDIMSGINVGIDTIHVQTGVSTYEDIQSKEIPPTYSFKDLNVAIAELEK</sequence>
<evidence type="ECO:0000250" key="1">
    <source>
        <dbReference type="UniProtKB" id="Q99VE8"/>
    </source>
</evidence>
<evidence type="ECO:0000305" key="2"/>
<proteinExistence type="inferred from homology"/>